<organism>
    <name type="scientific">Oryctolagus cuniculus</name>
    <name type="common">Rabbit</name>
    <dbReference type="NCBI Taxonomy" id="9986"/>
    <lineage>
        <taxon>Eukaryota</taxon>
        <taxon>Metazoa</taxon>
        <taxon>Chordata</taxon>
        <taxon>Craniata</taxon>
        <taxon>Vertebrata</taxon>
        <taxon>Euteleostomi</taxon>
        <taxon>Mammalia</taxon>
        <taxon>Eutheria</taxon>
        <taxon>Euarchontoglires</taxon>
        <taxon>Glires</taxon>
        <taxon>Lagomorpha</taxon>
        <taxon>Leporidae</taxon>
        <taxon>Oryctolagus</taxon>
    </lineage>
</organism>
<proteinExistence type="evidence at transcript level"/>
<sequence>MVGTTTTDVPPTMGVKIFSAGVAACLADVITFPLDTAKVRQQIQGEFPITSGIRYKGVLGTITTLAKTEGPLKLYSGLPAGLQRQISFASLRIGLYDTVQEFFTSGEETPSLGSKISAGLTTGGVAVFIGQPTEVVKVRLQAQSHLHGLKPRYTGTYNAYRIIATTESLTSLWKGTTPNLLRNVIINCTELVTYDLMKGALVRNEILADDVPCHFVSALIAGFCTTLLSSPVDVVKTRFINSPPGQYASVPNCAMTMFTKEGPTAFFKGFVPSFLRLGSWNVIMFVCFEKLKGELMRSRQTVDCAT</sequence>
<protein>
    <recommendedName>
        <fullName evidence="9">Mitochondrial brown fat uncoupling protein 1</fullName>
        <shortName evidence="9">UCP 1</shortName>
    </recommendedName>
    <alternativeName>
        <fullName evidence="4">Solute carrier family 25 member 7</fullName>
    </alternativeName>
    <alternativeName>
        <fullName evidence="1">Thermogenin</fullName>
    </alternativeName>
</protein>
<keyword id="KW-0407">Ion channel</keyword>
<keyword id="KW-0406">Ion transport</keyword>
<keyword id="KW-0472">Membrane</keyword>
<keyword id="KW-0496">Mitochondrion</keyword>
<keyword id="KW-0999">Mitochondrion inner membrane</keyword>
<keyword id="KW-0558">Oxidation</keyword>
<keyword id="KW-1185">Reference proteome</keyword>
<keyword id="KW-0677">Repeat</keyword>
<keyword id="KW-0812">Transmembrane</keyword>
<keyword id="KW-1133">Transmembrane helix</keyword>
<keyword id="KW-0813">Transport</keyword>
<name>UCP1_RABIT</name>
<evidence type="ECO:0000250" key="1">
    <source>
        <dbReference type="UniProtKB" id="P04575"/>
    </source>
</evidence>
<evidence type="ECO:0000250" key="2">
    <source>
        <dbReference type="UniProtKB" id="P04633"/>
    </source>
</evidence>
<evidence type="ECO:0000250" key="3">
    <source>
        <dbReference type="UniProtKB" id="P12242"/>
    </source>
</evidence>
<evidence type="ECO:0000250" key="4">
    <source>
        <dbReference type="UniProtKB" id="P25874"/>
    </source>
</evidence>
<evidence type="ECO:0000250" key="5">
    <source>
        <dbReference type="UniProtKB" id="W5PSH7"/>
    </source>
</evidence>
<evidence type="ECO:0000255" key="6"/>
<evidence type="ECO:0000269" key="7">
    <source>
    </source>
</evidence>
<evidence type="ECO:0000303" key="8">
    <source>
    </source>
</evidence>
<evidence type="ECO:0000305" key="9"/>
<reference key="1">
    <citation type="journal article" date="1989" name="Biochem. Biophys. Res. Commun.">
        <title>Rabbit brown adipose tissue uncoupling protein mRNA: use of only one of two polyadenylation signals in its processing.</title>
        <authorList>
            <person name="Balogh A.G."/>
            <person name="Ridley R.G."/>
            <person name="Patel H.V."/>
            <person name="Freeman K.B."/>
        </authorList>
    </citation>
    <scope>NUCLEOTIDE SEQUENCE [MRNA]</scope>
    <scope>TISSUE SPECIFICITY</scope>
</reference>
<feature type="chain" id="PRO_0000090661" description="Mitochondrial brown fat uncoupling protein 1">
    <location>
        <begin position="1"/>
        <end position="306"/>
    </location>
</feature>
<feature type="topological domain" description="Mitochondrial intermembrane" evidence="2">
    <location>
        <begin position="1"/>
        <end position="10"/>
    </location>
</feature>
<feature type="transmembrane region" description="Helical; Name=1" evidence="6">
    <location>
        <begin position="11"/>
        <end position="32"/>
    </location>
</feature>
<feature type="topological domain" description="Mitochondrial matrix" evidence="2">
    <location>
        <begin position="33"/>
        <end position="73"/>
    </location>
</feature>
<feature type="transmembrane region" description="Helical; Name=2" evidence="6">
    <location>
        <begin position="74"/>
        <end position="96"/>
    </location>
</feature>
<feature type="topological domain" description="Mitochondrial intermembrane" evidence="2">
    <location>
        <begin position="97"/>
        <end position="115"/>
    </location>
</feature>
<feature type="transmembrane region" description="Helical; Name=3" evidence="6">
    <location>
        <begin position="116"/>
        <end position="132"/>
    </location>
</feature>
<feature type="topological domain" description="Mitochondrial matrix" evidence="2">
    <location>
        <begin position="133"/>
        <end position="177"/>
    </location>
</feature>
<feature type="transmembrane region" description="Helical; Name=4" evidence="6">
    <location>
        <begin position="178"/>
        <end position="194"/>
    </location>
</feature>
<feature type="topological domain" description="Mitochondrial intermembrane" evidence="2">
    <location>
        <begin position="195"/>
        <end position="211"/>
    </location>
</feature>
<feature type="transmembrane region" description="Helical; Name=5" evidence="6">
    <location>
        <begin position="212"/>
        <end position="231"/>
    </location>
</feature>
<feature type="topological domain" description="Mitochondrial matrix" evidence="2">
    <location>
        <begin position="232"/>
        <end position="265"/>
    </location>
</feature>
<feature type="transmembrane region" description="Helical; Name=6" evidence="6">
    <location>
        <begin position="266"/>
        <end position="288"/>
    </location>
</feature>
<feature type="topological domain" description="Mitochondrial intermembrane" evidence="2">
    <location>
        <begin position="289"/>
        <end position="306"/>
    </location>
</feature>
<feature type="repeat" description="Solcar 1">
    <location>
        <begin position="11"/>
        <end position="102"/>
    </location>
</feature>
<feature type="repeat" description="Solcar 2">
    <location>
        <begin position="110"/>
        <end position="200"/>
    </location>
</feature>
<feature type="repeat" description="Solcar 3">
    <location>
        <begin position="209"/>
        <end position="294"/>
    </location>
</feature>
<feature type="binding site" evidence="4">
    <location>
        <position position="56"/>
    </location>
    <ligand>
        <name>fatty acid 16:0</name>
        <dbReference type="ChEBI" id="CHEBI:78123"/>
    </ligand>
</feature>
<feature type="binding site" evidence="4">
    <location>
        <position position="268"/>
    </location>
    <ligand>
        <name>fatty acid 16:0</name>
        <dbReference type="ChEBI" id="CHEBI:78123"/>
    </ligand>
</feature>
<feature type="modified residue" description="Cysteine sulfenic acid (-SOH)" evidence="3">
    <location>
        <position position="253"/>
    </location>
</feature>
<comment type="function">
    <text evidence="3">Mitochondrial protein responsible for thermogenic respiration, a specialized capacity of brown adipose tissue and beige fat that participates in non-shivering adaptive thermogenesis to temperature and diet variations and more generally to the regulation of energy balance. Functions as a long-chain fatty acid/LCFA and proton symporter, simultaneously transporting one LCFA and one proton through the inner mitochondrial membrane. However, LCFAs remaining associated with the transporter via their hydrophobic tails, it results in an apparent transport of protons activated by LCFAs. Thereby, dissipates the mitochondrial proton gradient and converts the energy of substrate oxydation into heat instead of ATP. Regulates the production of reactive oxygen species/ROS by mitochondria.</text>
</comment>
<comment type="catalytic activity">
    <reaction evidence="4">
        <text>H(+)(in) = H(+)(out)</text>
        <dbReference type="Rhea" id="RHEA:34979"/>
        <dbReference type="ChEBI" id="CHEBI:15378"/>
    </reaction>
</comment>
<comment type="activity regulation">
    <text evidence="3">Has no constitutive proton transporter activity and has to be activated by long-chain fatty acids/LCFAs. Inhibited by purine nucleotides. Both purine nucleotides and LCFAs bind the cytosolic side of the transporter and directly compete to activate or inhibit it. Activated by noradrenaline and reactive oxygen species. Despite lacking canonical translational encoding for selenocysteine, a small pool of the protein has been observed to selectively incorporate selenocysteine at 'Cys-253'. Selenocysteine-modified protein is highly sensitive to redox modification and may constitute a pool of protein highly sensitive to activation by elevated levels of reactive oxygen species (ROS).</text>
</comment>
<comment type="subunit">
    <text evidence="4 5">Most probably functions as a monomer. Binds one purine nucleotide per monomer. However, has also been suggested to function as a homodimer or a homotetramer. Tightly associates with cardiolipin in the mitochondrion inner membrane; may stabilize and regulate its activity.</text>
</comment>
<comment type="subcellular location">
    <subcellularLocation>
        <location evidence="3">Mitochondrion inner membrane</location>
        <topology evidence="2">Multi-pass membrane protein</topology>
    </subcellularLocation>
</comment>
<comment type="tissue specificity">
    <text evidence="7">Brown adipose tissue.</text>
</comment>
<comment type="PTM">
    <text evidence="3">May undergo sulfenylation upon cold exposure. May increase the sensitivity of UCP1 thermogenic function to the activation by noradrenaline probably through structural effects.</text>
</comment>
<comment type="PTM">
    <text evidence="2">May undergo ubiquitin-mediated proteasomal degradation.</text>
</comment>
<comment type="similarity">
    <text evidence="9">Belongs to the mitochondrial carrier (TC 2.A.29) family.</text>
</comment>
<dbReference type="EMBL" id="X14696">
    <property type="protein sequence ID" value="CAA32826.1"/>
    <property type="molecule type" value="mRNA"/>
</dbReference>
<dbReference type="PIR" id="A32446">
    <property type="entry name" value="A32446"/>
</dbReference>
<dbReference type="RefSeq" id="NP_001164548.1">
    <property type="nucleotide sequence ID" value="NM_001171077.1"/>
</dbReference>
<dbReference type="SMR" id="P14271"/>
<dbReference type="FunCoup" id="P14271">
    <property type="interactions" value="28"/>
</dbReference>
<dbReference type="STRING" id="9986.ENSOCUP00000001977"/>
<dbReference type="PaxDb" id="9986-ENSOCUP00000001977"/>
<dbReference type="GeneID" id="100328618"/>
<dbReference type="KEGG" id="ocu:100328618"/>
<dbReference type="CTD" id="7350"/>
<dbReference type="eggNOG" id="KOG0753">
    <property type="taxonomic scope" value="Eukaryota"/>
</dbReference>
<dbReference type="InParanoid" id="P14271"/>
<dbReference type="OrthoDB" id="448427at2759"/>
<dbReference type="Proteomes" id="UP000001811">
    <property type="component" value="Unplaced"/>
</dbReference>
<dbReference type="GO" id="GO:0005743">
    <property type="term" value="C:mitochondrial inner membrane"/>
    <property type="evidence" value="ECO:0000250"/>
    <property type="project" value="UniProtKB"/>
</dbReference>
<dbReference type="GO" id="GO:1901612">
    <property type="term" value="F:cardiolipin binding"/>
    <property type="evidence" value="ECO:0000250"/>
    <property type="project" value="UniProtKB"/>
</dbReference>
<dbReference type="GO" id="GO:0036041">
    <property type="term" value="F:long-chain fatty acid binding"/>
    <property type="evidence" value="ECO:0000250"/>
    <property type="project" value="UniProtKB"/>
</dbReference>
<dbReference type="GO" id="GO:0017077">
    <property type="term" value="F:oxidative phosphorylation uncoupler activity"/>
    <property type="evidence" value="ECO:0000250"/>
    <property type="project" value="UniProtKB"/>
</dbReference>
<dbReference type="GO" id="GO:0032555">
    <property type="term" value="F:purine ribonucleotide binding"/>
    <property type="evidence" value="ECO:0000250"/>
    <property type="project" value="UniProtKB"/>
</dbReference>
<dbReference type="GO" id="GO:1990845">
    <property type="term" value="P:adaptive thermogenesis"/>
    <property type="evidence" value="ECO:0000250"/>
    <property type="project" value="UniProtKB"/>
</dbReference>
<dbReference type="GO" id="GO:0071398">
    <property type="term" value="P:cellular response to fatty acid"/>
    <property type="evidence" value="ECO:0000250"/>
    <property type="project" value="UniProtKB"/>
</dbReference>
<dbReference type="GO" id="GO:0032870">
    <property type="term" value="P:cellular response to hormone stimulus"/>
    <property type="evidence" value="ECO:0000250"/>
    <property type="project" value="UniProtKB"/>
</dbReference>
<dbReference type="GO" id="GO:0034614">
    <property type="term" value="P:cellular response to reactive oxygen species"/>
    <property type="evidence" value="ECO:0000250"/>
    <property type="project" value="UniProtKB"/>
</dbReference>
<dbReference type="GO" id="GO:1990542">
    <property type="term" value="P:mitochondrial transmembrane transport"/>
    <property type="evidence" value="ECO:0000250"/>
    <property type="project" value="UniProtKB"/>
</dbReference>
<dbReference type="GO" id="GO:1902600">
    <property type="term" value="P:proton transmembrane transport"/>
    <property type="evidence" value="ECO:0000250"/>
    <property type="project" value="UniProtKB"/>
</dbReference>
<dbReference type="GO" id="GO:1903426">
    <property type="term" value="P:regulation of reactive oxygen species biosynthetic process"/>
    <property type="evidence" value="ECO:0000250"/>
    <property type="project" value="UniProtKB"/>
</dbReference>
<dbReference type="GO" id="GO:0031667">
    <property type="term" value="P:response to nutrient levels"/>
    <property type="evidence" value="ECO:0000250"/>
    <property type="project" value="UniProtKB"/>
</dbReference>
<dbReference type="GO" id="GO:0009266">
    <property type="term" value="P:response to temperature stimulus"/>
    <property type="evidence" value="ECO:0000250"/>
    <property type="project" value="UniProtKB"/>
</dbReference>
<dbReference type="FunFam" id="1.50.40.10:FF:000068">
    <property type="entry name" value="Mitochondrial brown fat uncoupling protein 1"/>
    <property type="match status" value="1"/>
</dbReference>
<dbReference type="Gene3D" id="1.50.40.10">
    <property type="entry name" value="Mitochondrial carrier domain"/>
    <property type="match status" value="1"/>
</dbReference>
<dbReference type="InterPro" id="IPR002067">
    <property type="entry name" value="Mit_carrier"/>
</dbReference>
<dbReference type="InterPro" id="IPR050391">
    <property type="entry name" value="Mito_Metabolite_Transporter"/>
</dbReference>
<dbReference type="InterPro" id="IPR018108">
    <property type="entry name" value="Mitochondrial_sb/sol_carrier"/>
</dbReference>
<dbReference type="InterPro" id="IPR023395">
    <property type="entry name" value="Mt_carrier_dom_sf"/>
</dbReference>
<dbReference type="PANTHER" id="PTHR45618">
    <property type="entry name" value="MITOCHONDRIAL DICARBOXYLATE CARRIER-RELATED"/>
    <property type="match status" value="1"/>
</dbReference>
<dbReference type="Pfam" id="PF00153">
    <property type="entry name" value="Mito_carr"/>
    <property type="match status" value="3"/>
</dbReference>
<dbReference type="PRINTS" id="PR00784">
    <property type="entry name" value="MTUNCOUPLING"/>
</dbReference>
<dbReference type="SUPFAM" id="SSF103506">
    <property type="entry name" value="Mitochondrial carrier"/>
    <property type="match status" value="1"/>
</dbReference>
<dbReference type="PROSITE" id="PS50920">
    <property type="entry name" value="SOLCAR"/>
    <property type="match status" value="3"/>
</dbReference>
<gene>
    <name evidence="4" type="primary">UCP1</name>
    <name evidence="4" type="synonym">SLC25A7</name>
    <name evidence="8" type="synonym">UCP</name>
</gene>
<accession>P14271</accession>